<sequence length="65" mass="7845">MVSVQLNDNESIDKMLKRFKKKYERAGVLKEFRKKAYFVKPSIDDRLKRSRGKRRAQRANEERNS</sequence>
<dbReference type="EMBL" id="CP001108">
    <property type="protein sequence ID" value="ACF46955.1"/>
    <property type="molecule type" value="Genomic_DNA"/>
</dbReference>
<dbReference type="RefSeq" id="WP_012506488.1">
    <property type="nucleotide sequence ID" value="NC_011059.1"/>
</dbReference>
<dbReference type="SMR" id="B4S4Q9"/>
<dbReference type="STRING" id="290512.Paes_1943"/>
<dbReference type="KEGG" id="paa:Paes_1943"/>
<dbReference type="eggNOG" id="COG0828">
    <property type="taxonomic scope" value="Bacteria"/>
</dbReference>
<dbReference type="HOGENOM" id="CLU_159258_2_1_10"/>
<dbReference type="Proteomes" id="UP000002725">
    <property type="component" value="Chromosome"/>
</dbReference>
<dbReference type="GO" id="GO:1990904">
    <property type="term" value="C:ribonucleoprotein complex"/>
    <property type="evidence" value="ECO:0007669"/>
    <property type="project" value="UniProtKB-KW"/>
</dbReference>
<dbReference type="GO" id="GO:0005840">
    <property type="term" value="C:ribosome"/>
    <property type="evidence" value="ECO:0007669"/>
    <property type="project" value="UniProtKB-KW"/>
</dbReference>
<dbReference type="GO" id="GO:0003735">
    <property type="term" value="F:structural constituent of ribosome"/>
    <property type="evidence" value="ECO:0007669"/>
    <property type="project" value="InterPro"/>
</dbReference>
<dbReference type="GO" id="GO:0006412">
    <property type="term" value="P:translation"/>
    <property type="evidence" value="ECO:0007669"/>
    <property type="project" value="UniProtKB-UniRule"/>
</dbReference>
<dbReference type="Gene3D" id="1.20.5.1150">
    <property type="entry name" value="Ribosomal protein S8"/>
    <property type="match status" value="1"/>
</dbReference>
<dbReference type="HAMAP" id="MF_00358">
    <property type="entry name" value="Ribosomal_bS21"/>
    <property type="match status" value="1"/>
</dbReference>
<dbReference type="InterPro" id="IPR001911">
    <property type="entry name" value="Ribosomal_bS21"/>
</dbReference>
<dbReference type="InterPro" id="IPR038380">
    <property type="entry name" value="Ribosomal_bS21_sf"/>
</dbReference>
<dbReference type="NCBIfam" id="TIGR00030">
    <property type="entry name" value="S21p"/>
    <property type="match status" value="1"/>
</dbReference>
<dbReference type="Pfam" id="PF01165">
    <property type="entry name" value="Ribosomal_S21"/>
    <property type="match status" value="1"/>
</dbReference>
<dbReference type="PRINTS" id="PR00976">
    <property type="entry name" value="RIBOSOMALS21"/>
</dbReference>
<evidence type="ECO:0000255" key="1">
    <source>
        <dbReference type="HAMAP-Rule" id="MF_00358"/>
    </source>
</evidence>
<evidence type="ECO:0000256" key="2">
    <source>
        <dbReference type="SAM" id="MobiDB-lite"/>
    </source>
</evidence>
<evidence type="ECO:0000305" key="3"/>
<feature type="chain" id="PRO_1000120648" description="Small ribosomal subunit protein bS21">
    <location>
        <begin position="1"/>
        <end position="65"/>
    </location>
</feature>
<feature type="region of interest" description="Disordered" evidence="2">
    <location>
        <begin position="44"/>
        <end position="65"/>
    </location>
</feature>
<feature type="compositionally biased region" description="Basic residues" evidence="2">
    <location>
        <begin position="48"/>
        <end position="57"/>
    </location>
</feature>
<reference key="1">
    <citation type="submission" date="2008-06" db="EMBL/GenBank/DDBJ databases">
        <title>Complete sequence of chromosome of Prosthecochloris aestuarii DSM 271.</title>
        <authorList>
            <consortium name="US DOE Joint Genome Institute"/>
            <person name="Lucas S."/>
            <person name="Copeland A."/>
            <person name="Lapidus A."/>
            <person name="Glavina del Rio T."/>
            <person name="Dalin E."/>
            <person name="Tice H."/>
            <person name="Bruce D."/>
            <person name="Goodwin L."/>
            <person name="Pitluck S."/>
            <person name="Schmutz J."/>
            <person name="Larimer F."/>
            <person name="Land M."/>
            <person name="Hauser L."/>
            <person name="Kyrpides N."/>
            <person name="Anderson I."/>
            <person name="Liu Z."/>
            <person name="Li T."/>
            <person name="Zhao F."/>
            <person name="Overmann J."/>
            <person name="Bryant D.A."/>
            <person name="Richardson P."/>
        </authorList>
    </citation>
    <scope>NUCLEOTIDE SEQUENCE [LARGE SCALE GENOMIC DNA]</scope>
    <source>
        <strain>DSM 271 / SK 413</strain>
    </source>
</reference>
<comment type="similarity">
    <text evidence="1">Belongs to the bacterial ribosomal protein bS21 family.</text>
</comment>
<organism>
    <name type="scientific">Prosthecochloris aestuarii (strain DSM 271 / SK 413)</name>
    <dbReference type="NCBI Taxonomy" id="290512"/>
    <lineage>
        <taxon>Bacteria</taxon>
        <taxon>Pseudomonadati</taxon>
        <taxon>Chlorobiota</taxon>
        <taxon>Chlorobiia</taxon>
        <taxon>Chlorobiales</taxon>
        <taxon>Chlorobiaceae</taxon>
        <taxon>Prosthecochloris</taxon>
    </lineage>
</organism>
<name>RS21_PROA2</name>
<proteinExistence type="inferred from homology"/>
<protein>
    <recommendedName>
        <fullName evidence="1">Small ribosomal subunit protein bS21</fullName>
    </recommendedName>
    <alternativeName>
        <fullName evidence="3">30S ribosomal protein S21</fullName>
    </alternativeName>
</protein>
<accession>B4S4Q9</accession>
<gene>
    <name evidence="1" type="primary">rpsU</name>
    <name type="ordered locus">Paes_1943</name>
</gene>
<keyword id="KW-0687">Ribonucleoprotein</keyword>
<keyword id="KW-0689">Ribosomal protein</keyword>